<keyword id="KW-0012">Acyltransferase</keyword>
<keyword id="KW-0997">Cell inner membrane</keyword>
<keyword id="KW-1003">Cell membrane</keyword>
<keyword id="KW-0444">Lipid biosynthesis</keyword>
<keyword id="KW-0443">Lipid metabolism</keyword>
<keyword id="KW-0472">Membrane</keyword>
<keyword id="KW-0594">Phospholipid biosynthesis</keyword>
<keyword id="KW-1208">Phospholipid metabolism</keyword>
<keyword id="KW-1185">Reference proteome</keyword>
<keyword id="KW-0808">Transferase</keyword>
<feature type="chain" id="PRO_0000208178" description="1-acyl-sn-glycerol-3-phosphate acyltransferase">
    <location>
        <begin position="1"/>
        <end position="245"/>
    </location>
</feature>
<feature type="short sequence motif" description="HXXXXD motif">
    <location>
        <begin position="73"/>
        <end position="78"/>
    </location>
</feature>
<reference key="1">
    <citation type="journal article" date="1991" name="New Biol.">
        <title>A cluster of genes that affects nucleoid segregation in Salmonella typhimurium.</title>
        <authorList>
            <person name="Luttinger A.L."/>
            <person name="Springer A.L."/>
            <person name="Schmid M.B."/>
        </authorList>
    </citation>
    <scope>NUCLEOTIDE SEQUENCE [GENOMIC DNA]</scope>
    <source>
        <strain>LT2</strain>
    </source>
</reference>
<reference key="2">
    <citation type="journal article" date="2001" name="Nature">
        <title>Complete genome sequence of Salmonella enterica serovar Typhimurium LT2.</title>
        <authorList>
            <person name="McClelland M."/>
            <person name="Sanderson K.E."/>
            <person name="Spieth J."/>
            <person name="Clifton S.W."/>
            <person name="Latreille P."/>
            <person name="Courtney L."/>
            <person name="Porwollik S."/>
            <person name="Ali J."/>
            <person name="Dante M."/>
            <person name="Du F."/>
            <person name="Hou S."/>
            <person name="Layman D."/>
            <person name="Leonard S."/>
            <person name="Nguyen C."/>
            <person name="Scott K."/>
            <person name="Holmes A."/>
            <person name="Grewal N."/>
            <person name="Mulvaney E."/>
            <person name="Ryan E."/>
            <person name="Sun H."/>
            <person name="Florea L."/>
            <person name="Miller W."/>
            <person name="Stoneking T."/>
            <person name="Nhan M."/>
            <person name="Waterston R."/>
            <person name="Wilson R.K."/>
        </authorList>
    </citation>
    <scope>NUCLEOTIDE SEQUENCE [LARGE SCALE GENOMIC DNA]</scope>
    <source>
        <strain>LT2 / SGSC1412 / ATCC 700720</strain>
    </source>
</reference>
<reference key="3">
    <citation type="submission" date="1994-04" db="EMBL/GenBank/DDBJ databases">
        <authorList>
            <person name="Cong J."/>
            <person name="Schmid M.B."/>
        </authorList>
    </citation>
    <scope>NUCLEOTIDE SEQUENCE [GENOMIC DNA] OF 236-245</scope>
    <source>
        <strain>LT2</strain>
    </source>
</reference>
<sequence>MLYIFRLIVTVIYSILVCVFGSIYCLFSPRNPKHVATFGHMFGRLAPLFGLKVECRKPADAENYGNAIYIANHQNNYDMVTAANIVQPPTVTVGKKSLLWIPFFGQLYWLTGNLLIDRNNRAKAHSTIAAVVNHFKKRRISIWMFPEGTRSRGRGLLPFKTGAFHAAIAAGVPIIPVCVSNTSNKVNLNRLNNGLVIVEMLPPVDVSEYGKDQVRELAAHCRALMEQKIAELDKEVAEREATGKV</sequence>
<accession>P0A257</accession>
<accession>P26974</accession>
<proteinExistence type="inferred from homology"/>
<dbReference type="EC" id="2.3.1.51"/>
<dbReference type="EMBL" id="M68936">
    <property type="protein sequence ID" value="AAA27181.1"/>
    <property type="molecule type" value="Genomic_DNA"/>
</dbReference>
<dbReference type="EMBL" id="AE006468">
    <property type="protein sequence ID" value="AAL22047.1"/>
    <property type="molecule type" value="Genomic_DNA"/>
</dbReference>
<dbReference type="EMBL" id="U09309">
    <property type="protein sequence ID" value="AAA56678.1"/>
    <property type="status" value="ALT_SEQ"/>
    <property type="molecule type" value="Unassigned_DNA"/>
</dbReference>
<dbReference type="PIR" id="B45582">
    <property type="entry name" value="B45582"/>
</dbReference>
<dbReference type="RefSeq" id="NP_462088.1">
    <property type="nucleotide sequence ID" value="NC_003197.2"/>
</dbReference>
<dbReference type="RefSeq" id="WP_000965730.1">
    <property type="nucleotide sequence ID" value="NC_003197.2"/>
</dbReference>
<dbReference type="SMR" id="P0A257"/>
<dbReference type="STRING" id="99287.STM3173"/>
<dbReference type="PaxDb" id="99287-STM3173"/>
<dbReference type="GeneID" id="1254696"/>
<dbReference type="KEGG" id="stm:STM3173"/>
<dbReference type="PATRIC" id="fig|99287.12.peg.3364"/>
<dbReference type="HOGENOM" id="CLU_027938_10_3_6"/>
<dbReference type="OMA" id="KKSLVWI"/>
<dbReference type="PhylomeDB" id="P0A257"/>
<dbReference type="BioCyc" id="SENT99287:STM3173-MONOMER"/>
<dbReference type="UniPathway" id="UPA00557">
    <property type="reaction ID" value="UER00613"/>
</dbReference>
<dbReference type="Proteomes" id="UP000001014">
    <property type="component" value="Chromosome"/>
</dbReference>
<dbReference type="GO" id="GO:0005886">
    <property type="term" value="C:plasma membrane"/>
    <property type="evidence" value="ECO:0000318"/>
    <property type="project" value="GO_Central"/>
</dbReference>
<dbReference type="GO" id="GO:0003841">
    <property type="term" value="F:1-acylglycerol-3-phosphate O-acyltransferase activity"/>
    <property type="evidence" value="ECO:0000318"/>
    <property type="project" value="GO_Central"/>
</dbReference>
<dbReference type="GO" id="GO:0016024">
    <property type="term" value="P:CDP-diacylglycerol biosynthetic process"/>
    <property type="evidence" value="ECO:0007669"/>
    <property type="project" value="UniProtKB-UniPathway"/>
</dbReference>
<dbReference type="GO" id="GO:0006654">
    <property type="term" value="P:phosphatidic acid biosynthetic process"/>
    <property type="evidence" value="ECO:0000318"/>
    <property type="project" value="GO_Central"/>
</dbReference>
<dbReference type="CDD" id="cd07989">
    <property type="entry name" value="LPLAT_AGPAT-like"/>
    <property type="match status" value="1"/>
</dbReference>
<dbReference type="InterPro" id="IPR004552">
    <property type="entry name" value="AGP_acyltrans"/>
</dbReference>
<dbReference type="InterPro" id="IPR002123">
    <property type="entry name" value="Plipid/glycerol_acylTrfase"/>
</dbReference>
<dbReference type="NCBIfam" id="TIGR00530">
    <property type="entry name" value="AGP_acyltrn"/>
    <property type="match status" value="1"/>
</dbReference>
<dbReference type="NCBIfam" id="NF011593">
    <property type="entry name" value="PRK15018.1"/>
    <property type="match status" value="1"/>
</dbReference>
<dbReference type="PANTHER" id="PTHR10434">
    <property type="entry name" value="1-ACYL-SN-GLYCEROL-3-PHOSPHATE ACYLTRANSFERASE"/>
    <property type="match status" value="1"/>
</dbReference>
<dbReference type="PANTHER" id="PTHR10434:SF11">
    <property type="entry name" value="1-ACYL-SN-GLYCEROL-3-PHOSPHATE ACYLTRANSFERASE"/>
    <property type="match status" value="1"/>
</dbReference>
<dbReference type="Pfam" id="PF01553">
    <property type="entry name" value="Acyltransferase"/>
    <property type="match status" value="1"/>
</dbReference>
<dbReference type="SMART" id="SM00563">
    <property type="entry name" value="PlsC"/>
    <property type="match status" value="1"/>
</dbReference>
<dbReference type="SUPFAM" id="SSF69593">
    <property type="entry name" value="Glycerol-3-phosphate (1)-acyltransferase"/>
    <property type="match status" value="1"/>
</dbReference>
<protein>
    <recommendedName>
        <fullName>1-acyl-sn-glycerol-3-phosphate acyltransferase</fullName>
        <shortName>1-AGP acyltransferase</shortName>
        <shortName>1-AGPAT</shortName>
        <ecNumber>2.3.1.51</ecNumber>
    </recommendedName>
    <alternativeName>
        <fullName>Lysophosphatidic acid acyltransferase</fullName>
        <shortName>LPAAT</shortName>
    </alternativeName>
</protein>
<organism>
    <name type="scientific">Salmonella typhimurium (strain LT2 / SGSC1412 / ATCC 700720)</name>
    <dbReference type="NCBI Taxonomy" id="99287"/>
    <lineage>
        <taxon>Bacteria</taxon>
        <taxon>Pseudomonadati</taxon>
        <taxon>Pseudomonadota</taxon>
        <taxon>Gammaproteobacteria</taxon>
        <taxon>Enterobacterales</taxon>
        <taxon>Enterobacteriaceae</taxon>
        <taxon>Salmonella</taxon>
    </lineage>
</organism>
<comment type="function">
    <text>Converts lysophosphatidic acid (LPA) into phosphatidic acid by incorporating an acyl moiety at the 2 position. This enzyme can utilize either acyl-CoA or acyl-acyl-carrier-protein as the fatty acyl donor.</text>
</comment>
<comment type="catalytic activity">
    <reaction>
        <text>a 1-acyl-sn-glycero-3-phosphate + an acyl-CoA = a 1,2-diacyl-sn-glycero-3-phosphate + CoA</text>
        <dbReference type="Rhea" id="RHEA:19709"/>
        <dbReference type="ChEBI" id="CHEBI:57287"/>
        <dbReference type="ChEBI" id="CHEBI:57970"/>
        <dbReference type="ChEBI" id="CHEBI:58342"/>
        <dbReference type="ChEBI" id="CHEBI:58608"/>
        <dbReference type="EC" id="2.3.1.51"/>
    </reaction>
</comment>
<comment type="pathway">
    <text>Phospholipid metabolism; CDP-diacylglycerol biosynthesis; CDP-diacylglycerol from sn-glycerol 3-phosphate: step 2/3.</text>
</comment>
<comment type="subcellular location">
    <subcellularLocation>
        <location>Cell inner membrane</location>
        <topology>Peripheral membrane protein</topology>
    </subcellularLocation>
</comment>
<comment type="domain">
    <text evidence="1">The HXXXXD motif is essential for acyltransferase activity and may constitute the binding site for the phosphate moiety of the glycerol-3-phosphate.</text>
</comment>
<comment type="similarity">
    <text evidence="2">Belongs to the 1-acyl-sn-glycerol-3-phosphate acyltransferase family.</text>
</comment>
<evidence type="ECO:0000250" key="1"/>
<evidence type="ECO:0000305" key="2"/>
<gene>
    <name type="primary">plsC</name>
    <name type="synonym">parF</name>
    <name type="ordered locus">STM3173</name>
</gene>
<name>PLSC_SALTY</name>